<proteinExistence type="inferred from homology"/>
<organism>
    <name type="scientific">Francisella tularensis subsp. tularensis (strain SCHU S4 / Schu 4)</name>
    <dbReference type="NCBI Taxonomy" id="177416"/>
    <lineage>
        <taxon>Bacteria</taxon>
        <taxon>Pseudomonadati</taxon>
        <taxon>Pseudomonadota</taxon>
        <taxon>Gammaproteobacteria</taxon>
        <taxon>Thiotrichales</taxon>
        <taxon>Francisellaceae</taxon>
        <taxon>Francisella</taxon>
    </lineage>
</organism>
<accession>Q5NG38</accession>
<keyword id="KW-0067">ATP-binding</keyword>
<keyword id="KW-0315">Glutamine amidotransferase</keyword>
<keyword id="KW-0332">GMP biosynthesis</keyword>
<keyword id="KW-0436">Ligase</keyword>
<keyword id="KW-0547">Nucleotide-binding</keyword>
<keyword id="KW-0658">Purine biosynthesis</keyword>
<keyword id="KW-1185">Reference proteome</keyword>
<feature type="chain" id="PRO_0000229429" description="GMP synthase [glutamine-hydrolyzing]">
    <location>
        <begin position="1"/>
        <end position="516"/>
    </location>
</feature>
<feature type="domain" description="Glutamine amidotransferase type-1" evidence="1">
    <location>
        <begin position="8"/>
        <end position="198"/>
    </location>
</feature>
<feature type="domain" description="GMPS ATP-PPase" evidence="1">
    <location>
        <begin position="199"/>
        <end position="391"/>
    </location>
</feature>
<feature type="active site" description="Nucleophile" evidence="1">
    <location>
        <position position="84"/>
    </location>
</feature>
<feature type="active site" evidence="1">
    <location>
        <position position="172"/>
    </location>
</feature>
<feature type="active site" evidence="1">
    <location>
        <position position="174"/>
    </location>
</feature>
<feature type="binding site" evidence="1">
    <location>
        <begin position="226"/>
        <end position="232"/>
    </location>
    <ligand>
        <name>ATP</name>
        <dbReference type="ChEBI" id="CHEBI:30616"/>
    </ligand>
</feature>
<gene>
    <name evidence="1" type="primary">guaA</name>
    <name type="ordered locus">FTT_1019c</name>
</gene>
<evidence type="ECO:0000255" key="1">
    <source>
        <dbReference type="HAMAP-Rule" id="MF_00344"/>
    </source>
</evidence>
<dbReference type="EC" id="6.3.5.2" evidence="1"/>
<dbReference type="EMBL" id="AJ749949">
    <property type="protein sequence ID" value="CAG45652.1"/>
    <property type="molecule type" value="Genomic_DNA"/>
</dbReference>
<dbReference type="RefSeq" id="WP_003021114.1">
    <property type="nucleotide sequence ID" value="NC_006570.2"/>
</dbReference>
<dbReference type="RefSeq" id="YP_170004.1">
    <property type="nucleotide sequence ID" value="NC_006570.2"/>
</dbReference>
<dbReference type="SMR" id="Q5NG38"/>
<dbReference type="STRING" id="177416.FTT_1019c"/>
<dbReference type="MEROPS" id="C26.957"/>
<dbReference type="DNASU" id="3191098"/>
<dbReference type="EnsemblBacteria" id="CAG45652">
    <property type="protein sequence ID" value="CAG45652"/>
    <property type="gene ID" value="FTT_1019c"/>
</dbReference>
<dbReference type="KEGG" id="ftu:FTT_1019c"/>
<dbReference type="eggNOG" id="COG0518">
    <property type="taxonomic scope" value="Bacteria"/>
</dbReference>
<dbReference type="eggNOG" id="COG0519">
    <property type="taxonomic scope" value="Bacteria"/>
</dbReference>
<dbReference type="OrthoDB" id="9802219at2"/>
<dbReference type="UniPathway" id="UPA00189">
    <property type="reaction ID" value="UER00296"/>
</dbReference>
<dbReference type="Proteomes" id="UP000001174">
    <property type="component" value="Chromosome"/>
</dbReference>
<dbReference type="GO" id="GO:0005829">
    <property type="term" value="C:cytosol"/>
    <property type="evidence" value="ECO:0007669"/>
    <property type="project" value="TreeGrafter"/>
</dbReference>
<dbReference type="GO" id="GO:0005524">
    <property type="term" value="F:ATP binding"/>
    <property type="evidence" value="ECO:0007669"/>
    <property type="project" value="UniProtKB-UniRule"/>
</dbReference>
<dbReference type="GO" id="GO:0003921">
    <property type="term" value="F:GMP synthase activity"/>
    <property type="evidence" value="ECO:0007669"/>
    <property type="project" value="InterPro"/>
</dbReference>
<dbReference type="CDD" id="cd01742">
    <property type="entry name" value="GATase1_GMP_Synthase"/>
    <property type="match status" value="1"/>
</dbReference>
<dbReference type="CDD" id="cd01997">
    <property type="entry name" value="GMP_synthase_C"/>
    <property type="match status" value="1"/>
</dbReference>
<dbReference type="FunFam" id="3.30.300.10:FF:000002">
    <property type="entry name" value="GMP synthase [glutamine-hydrolyzing]"/>
    <property type="match status" value="1"/>
</dbReference>
<dbReference type="FunFam" id="3.40.50.620:FF:000001">
    <property type="entry name" value="GMP synthase [glutamine-hydrolyzing]"/>
    <property type="match status" value="1"/>
</dbReference>
<dbReference type="FunFam" id="3.40.50.880:FF:000001">
    <property type="entry name" value="GMP synthase [glutamine-hydrolyzing]"/>
    <property type="match status" value="1"/>
</dbReference>
<dbReference type="Gene3D" id="3.30.300.10">
    <property type="match status" value="1"/>
</dbReference>
<dbReference type="Gene3D" id="3.40.50.880">
    <property type="match status" value="1"/>
</dbReference>
<dbReference type="Gene3D" id="3.40.50.620">
    <property type="entry name" value="HUPs"/>
    <property type="match status" value="1"/>
</dbReference>
<dbReference type="HAMAP" id="MF_00344">
    <property type="entry name" value="GMP_synthase"/>
    <property type="match status" value="1"/>
</dbReference>
<dbReference type="InterPro" id="IPR029062">
    <property type="entry name" value="Class_I_gatase-like"/>
</dbReference>
<dbReference type="InterPro" id="IPR017926">
    <property type="entry name" value="GATASE"/>
</dbReference>
<dbReference type="InterPro" id="IPR001674">
    <property type="entry name" value="GMP_synth_C"/>
</dbReference>
<dbReference type="InterPro" id="IPR004739">
    <property type="entry name" value="GMP_synth_GATase"/>
</dbReference>
<dbReference type="InterPro" id="IPR022955">
    <property type="entry name" value="GMP_synthase"/>
</dbReference>
<dbReference type="InterPro" id="IPR025777">
    <property type="entry name" value="GMPS_ATP_PPase_dom"/>
</dbReference>
<dbReference type="InterPro" id="IPR022310">
    <property type="entry name" value="NAD/GMP_synthase"/>
</dbReference>
<dbReference type="InterPro" id="IPR014729">
    <property type="entry name" value="Rossmann-like_a/b/a_fold"/>
</dbReference>
<dbReference type="NCBIfam" id="TIGR00884">
    <property type="entry name" value="guaA_Cterm"/>
    <property type="match status" value="1"/>
</dbReference>
<dbReference type="NCBIfam" id="TIGR00888">
    <property type="entry name" value="guaA_Nterm"/>
    <property type="match status" value="1"/>
</dbReference>
<dbReference type="NCBIfam" id="NF000848">
    <property type="entry name" value="PRK00074.1"/>
    <property type="match status" value="1"/>
</dbReference>
<dbReference type="PANTHER" id="PTHR11922:SF2">
    <property type="entry name" value="GMP SYNTHASE [GLUTAMINE-HYDROLYZING]"/>
    <property type="match status" value="1"/>
</dbReference>
<dbReference type="PANTHER" id="PTHR11922">
    <property type="entry name" value="GMP SYNTHASE-RELATED"/>
    <property type="match status" value="1"/>
</dbReference>
<dbReference type="Pfam" id="PF00117">
    <property type="entry name" value="GATase"/>
    <property type="match status" value="1"/>
</dbReference>
<dbReference type="Pfam" id="PF00958">
    <property type="entry name" value="GMP_synt_C"/>
    <property type="match status" value="1"/>
</dbReference>
<dbReference type="Pfam" id="PF02540">
    <property type="entry name" value="NAD_synthase"/>
    <property type="match status" value="1"/>
</dbReference>
<dbReference type="PRINTS" id="PR00097">
    <property type="entry name" value="ANTSNTHASEII"/>
</dbReference>
<dbReference type="PRINTS" id="PR00096">
    <property type="entry name" value="GATASE"/>
</dbReference>
<dbReference type="SUPFAM" id="SSF52402">
    <property type="entry name" value="Adenine nucleotide alpha hydrolases-like"/>
    <property type="match status" value="1"/>
</dbReference>
<dbReference type="SUPFAM" id="SSF52317">
    <property type="entry name" value="Class I glutamine amidotransferase-like"/>
    <property type="match status" value="1"/>
</dbReference>
<dbReference type="SUPFAM" id="SSF54810">
    <property type="entry name" value="GMP synthetase C-terminal dimerisation domain"/>
    <property type="match status" value="1"/>
</dbReference>
<dbReference type="PROSITE" id="PS51273">
    <property type="entry name" value="GATASE_TYPE_1"/>
    <property type="match status" value="1"/>
</dbReference>
<dbReference type="PROSITE" id="PS51553">
    <property type="entry name" value="GMPS_ATP_PPASE"/>
    <property type="match status" value="1"/>
</dbReference>
<name>GUAA_FRATT</name>
<reference key="1">
    <citation type="journal article" date="2005" name="Nat. Genet.">
        <title>The complete genome sequence of Francisella tularensis, the causative agent of tularemia.</title>
        <authorList>
            <person name="Larsson P."/>
            <person name="Oyston P.C.F."/>
            <person name="Chain P."/>
            <person name="Chu M.C."/>
            <person name="Duffield M."/>
            <person name="Fuxelius H.-H."/>
            <person name="Garcia E."/>
            <person name="Haelltorp G."/>
            <person name="Johansson D."/>
            <person name="Isherwood K.E."/>
            <person name="Karp P.D."/>
            <person name="Larsson E."/>
            <person name="Liu Y."/>
            <person name="Michell S."/>
            <person name="Prior J."/>
            <person name="Prior R."/>
            <person name="Malfatti S."/>
            <person name="Sjoestedt A."/>
            <person name="Svensson K."/>
            <person name="Thompson N."/>
            <person name="Vergez L."/>
            <person name="Wagg J.K."/>
            <person name="Wren B.W."/>
            <person name="Lindler L.E."/>
            <person name="Andersson S.G.E."/>
            <person name="Forsman M."/>
            <person name="Titball R.W."/>
        </authorList>
    </citation>
    <scope>NUCLEOTIDE SEQUENCE [LARGE SCALE GENOMIC DNA]</scope>
    <source>
        <strain>SCHU S4 / Schu 4</strain>
    </source>
</reference>
<comment type="function">
    <text evidence="1">Catalyzes the synthesis of GMP from XMP.</text>
</comment>
<comment type="catalytic activity">
    <reaction evidence="1">
        <text>XMP + L-glutamine + ATP + H2O = GMP + L-glutamate + AMP + diphosphate + 2 H(+)</text>
        <dbReference type="Rhea" id="RHEA:11680"/>
        <dbReference type="ChEBI" id="CHEBI:15377"/>
        <dbReference type="ChEBI" id="CHEBI:15378"/>
        <dbReference type="ChEBI" id="CHEBI:29985"/>
        <dbReference type="ChEBI" id="CHEBI:30616"/>
        <dbReference type="ChEBI" id="CHEBI:33019"/>
        <dbReference type="ChEBI" id="CHEBI:57464"/>
        <dbReference type="ChEBI" id="CHEBI:58115"/>
        <dbReference type="ChEBI" id="CHEBI:58359"/>
        <dbReference type="ChEBI" id="CHEBI:456215"/>
        <dbReference type="EC" id="6.3.5.2"/>
    </reaction>
</comment>
<comment type="pathway">
    <text evidence="1">Purine metabolism; GMP biosynthesis; GMP from XMP (L-Gln route): step 1/1.</text>
</comment>
<comment type="subunit">
    <text evidence="1">Homodimer.</text>
</comment>
<protein>
    <recommendedName>
        <fullName evidence="1">GMP synthase [glutamine-hydrolyzing]</fullName>
        <ecNumber evidence="1">6.3.5.2</ecNumber>
    </recommendedName>
    <alternativeName>
        <fullName evidence="1">GMP synthetase</fullName>
    </alternativeName>
    <alternativeName>
        <fullName evidence="1">Glutamine amidotransferase</fullName>
    </alternativeName>
</protein>
<sequence length="516" mass="57628">MTDIHNHKILILDFGSQYTQLIARRVREVGVFCEIFPHDVAADFIKNYQAKGIILSGGPESVYDSDVKAPEIVFELGVPVLGICYGMQTMVMQHGGEVKGADQSEFGKAIINILNSTNNIFSNMEHEQLVWMSHSDKVTQTGEHFEIIASSTNAPVAAVAHKNKPFFGVQFHPETTHTENGKQIIENFVVNICGCDTLWNIENIIENDIKEIKQKVGTDKVILGLSGGVDSSVVAAILHQAIGDQLTCIFVDTGLLRLNEGDQVMQVFAEHMDINVIRINAKNRFLDALRGICDPEQKRKIIGKLFVDIFDEEAAKIENAKWLAQGTIYSDVIESAGNNQSKAHVIKSHHNVGGLPKEMKLKLLEPLRELFKDEVRKLGLGLGLPYNMLYRHPFPGPGLGVRILGEIKKEYVETLQKADAIFTEELYKHNLYHDVSQAFGVFLPVKSVGVVGDQRRYEYVIALRAVVSIDFMTATWANLPYDFLSLVSNRIVNEVKQVSRVVYDVTGKPPGTIEWE</sequence>